<feature type="chain" id="PRO_0000421315" description="WAT1-related protein At1g43650">
    <location>
        <begin position="1"/>
        <end position="343"/>
    </location>
</feature>
<feature type="transmembrane region" description="Helical" evidence="2">
    <location>
        <begin position="9"/>
        <end position="29"/>
    </location>
</feature>
<feature type="transmembrane region" description="Helical" evidence="2">
    <location>
        <begin position="36"/>
        <end position="56"/>
    </location>
</feature>
<feature type="transmembrane region" description="Helical" evidence="2">
    <location>
        <begin position="65"/>
        <end position="85"/>
    </location>
</feature>
<feature type="transmembrane region" description="Helical" evidence="2">
    <location>
        <begin position="98"/>
        <end position="118"/>
    </location>
</feature>
<feature type="transmembrane region" description="Helical" evidence="2">
    <location>
        <begin position="130"/>
        <end position="150"/>
    </location>
</feature>
<feature type="transmembrane region" description="Helical" evidence="2">
    <location>
        <begin position="175"/>
        <end position="195"/>
    </location>
</feature>
<feature type="transmembrane region" description="Helical" evidence="2">
    <location>
        <begin position="209"/>
        <end position="229"/>
    </location>
</feature>
<feature type="transmembrane region" description="Helical" evidence="2">
    <location>
        <begin position="239"/>
        <end position="259"/>
    </location>
</feature>
<feature type="transmembrane region" description="Helical" evidence="2">
    <location>
        <begin position="272"/>
        <end position="292"/>
    </location>
</feature>
<feature type="transmembrane region" description="Helical" evidence="2">
    <location>
        <begin position="296"/>
        <end position="316"/>
    </location>
</feature>
<feature type="domain" description="EamA 1">
    <location>
        <begin position="16"/>
        <end position="139"/>
    </location>
</feature>
<feature type="domain" description="EamA 2">
    <location>
        <begin position="188"/>
        <end position="313"/>
    </location>
</feature>
<evidence type="ECO:0000250" key="1"/>
<evidence type="ECO:0000255" key="2"/>
<evidence type="ECO:0000305" key="3"/>
<gene>
    <name type="ordered locus">At1g43650</name>
    <name type="ORF">F2J6.1</name>
</gene>
<proteinExistence type="evidence at transcript level"/>
<comment type="subcellular location">
    <subcellularLocation>
        <location evidence="1">Membrane</location>
        <topology evidence="3">Multi-pass membrane protein</topology>
    </subcellularLocation>
</comment>
<comment type="alternative products">
    <event type="alternative splicing"/>
    <isoform>
        <id>Q6NMB7-1</id>
        <name>1</name>
        <sequence type="displayed"/>
    </isoform>
    <text>Additional isoforms seem to exist.</text>
</comment>
<comment type="similarity">
    <text evidence="3">Belongs to the drug/metabolite transporter (DMT) superfamily. Plant drug/metabolite exporter (P-DME) (TC 2.A.7.4) family.</text>
</comment>
<name>WTR7_ARATH</name>
<dbReference type="EMBL" id="CP002684">
    <property type="protein sequence ID" value="AEE31980.1"/>
    <property type="molecule type" value="Genomic_DNA"/>
</dbReference>
<dbReference type="EMBL" id="BT011743">
    <property type="protein sequence ID" value="AAS49106.1"/>
    <property type="molecule type" value="mRNA"/>
</dbReference>
<dbReference type="EMBL" id="AK176218">
    <property type="protein sequence ID" value="BAD43981.1"/>
    <property type="molecule type" value="mRNA"/>
</dbReference>
<dbReference type="RefSeq" id="NP_175030.2">
    <molecule id="Q6NMB7-1"/>
    <property type="nucleotide sequence ID" value="NM_103490.4"/>
</dbReference>
<dbReference type="SMR" id="Q6NMB7"/>
<dbReference type="STRING" id="3702.Q6NMB7"/>
<dbReference type="PaxDb" id="3702-AT1G43650.1"/>
<dbReference type="EnsemblPlants" id="AT1G43650.1">
    <molecule id="Q6NMB7-1"/>
    <property type="protein sequence ID" value="AT1G43650.1"/>
    <property type="gene ID" value="AT1G43650"/>
</dbReference>
<dbReference type="GeneID" id="840949"/>
<dbReference type="Gramene" id="AT1G43650.1">
    <molecule id="Q6NMB7-1"/>
    <property type="protein sequence ID" value="AT1G43650.1"/>
    <property type="gene ID" value="AT1G43650"/>
</dbReference>
<dbReference type="KEGG" id="ath:AT1G43650"/>
<dbReference type="Araport" id="AT1G43650"/>
<dbReference type="TAIR" id="AT1G43650">
    <property type="gene designation" value="UMAMIT22"/>
</dbReference>
<dbReference type="eggNOG" id="ENOG502QUJ3">
    <property type="taxonomic scope" value="Eukaryota"/>
</dbReference>
<dbReference type="HOGENOM" id="CLU_025359_1_0_1"/>
<dbReference type="InParanoid" id="Q6NMB7"/>
<dbReference type="OMA" id="METIKFH"/>
<dbReference type="PhylomeDB" id="Q6NMB7"/>
<dbReference type="PRO" id="PR:Q6NMB7"/>
<dbReference type="Proteomes" id="UP000006548">
    <property type="component" value="Chromosome 1"/>
</dbReference>
<dbReference type="ExpressionAtlas" id="Q6NMB7">
    <property type="expression patterns" value="baseline and differential"/>
</dbReference>
<dbReference type="GO" id="GO:0016020">
    <property type="term" value="C:membrane"/>
    <property type="evidence" value="ECO:0007669"/>
    <property type="project" value="UniProtKB-SubCell"/>
</dbReference>
<dbReference type="GO" id="GO:0022857">
    <property type="term" value="F:transmembrane transporter activity"/>
    <property type="evidence" value="ECO:0007669"/>
    <property type="project" value="InterPro"/>
</dbReference>
<dbReference type="InterPro" id="IPR000620">
    <property type="entry name" value="EamA_dom"/>
</dbReference>
<dbReference type="InterPro" id="IPR030184">
    <property type="entry name" value="WAT1-related"/>
</dbReference>
<dbReference type="PANTHER" id="PTHR31218">
    <property type="entry name" value="WAT1-RELATED PROTEIN"/>
    <property type="match status" value="1"/>
</dbReference>
<dbReference type="Pfam" id="PF00892">
    <property type="entry name" value="EamA"/>
    <property type="match status" value="2"/>
</dbReference>
<dbReference type="SUPFAM" id="SSF103481">
    <property type="entry name" value="Multidrug resistance efflux transporter EmrE"/>
    <property type="match status" value="2"/>
</dbReference>
<keyword id="KW-0025">Alternative splicing</keyword>
<keyword id="KW-0472">Membrane</keyword>
<keyword id="KW-1185">Reference proteome</keyword>
<keyword id="KW-0677">Repeat</keyword>
<keyword id="KW-0812">Transmembrane</keyword>
<keyword id="KW-1133">Transmembrane helix</keyword>
<reference key="1">
    <citation type="journal article" date="2017" name="Plant J.">
        <title>Araport11: a complete reannotation of the Arabidopsis thaliana reference genome.</title>
        <authorList>
            <person name="Cheng C.Y."/>
            <person name="Krishnakumar V."/>
            <person name="Chan A.P."/>
            <person name="Thibaud-Nissen F."/>
            <person name="Schobel S."/>
            <person name="Town C.D."/>
        </authorList>
    </citation>
    <scope>GENOME REANNOTATION</scope>
    <source>
        <strain>cv. Columbia</strain>
    </source>
</reference>
<reference key="2">
    <citation type="submission" date="2004-03" db="EMBL/GenBank/DDBJ databases">
        <title>Arabidopsis ORF clones.</title>
        <authorList>
            <person name="Cheuk R.F."/>
            <person name="Chen H."/>
            <person name="Kim C.J."/>
            <person name="Shinn P."/>
            <person name="Carninci P."/>
            <person name="Hayashizaki Y."/>
            <person name="Ishida J."/>
            <person name="Kamiya A."/>
            <person name="Kawai J."/>
            <person name="Narusaka M."/>
            <person name="Sakurai T."/>
            <person name="Satou M."/>
            <person name="Seki M."/>
            <person name="Shinozaki K."/>
            <person name="Ecker J.R."/>
        </authorList>
    </citation>
    <scope>NUCLEOTIDE SEQUENCE [LARGE SCALE MRNA]</scope>
    <source>
        <strain>cv. Columbia</strain>
    </source>
</reference>
<reference key="3">
    <citation type="submission" date="2004-09" db="EMBL/GenBank/DDBJ databases">
        <title>Large-scale analysis of RIKEN Arabidopsis full-length (RAFL) cDNAs.</title>
        <authorList>
            <person name="Totoki Y."/>
            <person name="Seki M."/>
            <person name="Ishida J."/>
            <person name="Nakajima M."/>
            <person name="Enju A."/>
            <person name="Kamiya A."/>
            <person name="Narusaka M."/>
            <person name="Shin-i T."/>
            <person name="Nakagawa M."/>
            <person name="Sakamoto N."/>
            <person name="Oishi K."/>
            <person name="Kohara Y."/>
            <person name="Kobayashi M."/>
            <person name="Toyoda A."/>
            <person name="Sakaki Y."/>
            <person name="Sakurai T."/>
            <person name="Iida K."/>
            <person name="Akiyama K."/>
            <person name="Satou M."/>
            <person name="Toyoda T."/>
            <person name="Konagaya A."/>
            <person name="Carninci P."/>
            <person name="Kawai J."/>
            <person name="Hayashizaki Y."/>
            <person name="Shinozaki K."/>
        </authorList>
    </citation>
    <scope>NUCLEOTIDE SEQUENCE [LARGE SCALE MRNA]</scope>
    <source>
        <strain>cv. Columbia</strain>
    </source>
</reference>
<sequence length="343" mass="37715">MMMEHKANMAMVFVQIVYAGMPLLSKVAISQGTNPFVFVFYRQAFAALALSPFAFFLESSKSSPLSFILLLKIFFISLCGLTLSLNLYYVAIENTTATFAAATTNAIPSITFVLALLFRLETVTLKKSHGVAKVTGSMVGMLGALVFAFVKGPSLINHYNSSTIPNGTVPSTKNSVKGSITMLAANTCWCLWIIMQSKVMKEYPAKLRLVALQCLFSCIQSAVWAVAVNRNPSVWKIEFGLPLLSMAYCGIMVTGLTYWLQVWAIEKKGPVFTALYTPLALILTCIVSSFLFKETFYLGSVGGAVLLVCGLYLGLWGKTKEEEIQRYGEKQSQKEIIEEVIIV</sequence>
<organism>
    <name type="scientific">Arabidopsis thaliana</name>
    <name type="common">Mouse-ear cress</name>
    <dbReference type="NCBI Taxonomy" id="3702"/>
    <lineage>
        <taxon>Eukaryota</taxon>
        <taxon>Viridiplantae</taxon>
        <taxon>Streptophyta</taxon>
        <taxon>Embryophyta</taxon>
        <taxon>Tracheophyta</taxon>
        <taxon>Spermatophyta</taxon>
        <taxon>Magnoliopsida</taxon>
        <taxon>eudicotyledons</taxon>
        <taxon>Gunneridae</taxon>
        <taxon>Pentapetalae</taxon>
        <taxon>rosids</taxon>
        <taxon>malvids</taxon>
        <taxon>Brassicales</taxon>
        <taxon>Brassicaceae</taxon>
        <taxon>Camelineae</taxon>
        <taxon>Arabidopsis</taxon>
    </lineage>
</organism>
<accession>Q6NMB7</accession>
<protein>
    <recommendedName>
        <fullName>WAT1-related protein At1g43650</fullName>
    </recommendedName>
</protein>